<proteinExistence type="inferred from homology"/>
<accession>Q12KE6</accession>
<gene>
    <name evidence="1" type="primary">mtnN</name>
    <name type="ordered locus">Sden_2801</name>
</gene>
<reference key="1">
    <citation type="submission" date="2006-03" db="EMBL/GenBank/DDBJ databases">
        <title>Complete sequence of Shewanella denitrificans OS217.</title>
        <authorList>
            <consortium name="US DOE Joint Genome Institute"/>
            <person name="Copeland A."/>
            <person name="Lucas S."/>
            <person name="Lapidus A."/>
            <person name="Barry K."/>
            <person name="Detter J.C."/>
            <person name="Glavina del Rio T."/>
            <person name="Hammon N."/>
            <person name="Israni S."/>
            <person name="Dalin E."/>
            <person name="Tice H."/>
            <person name="Pitluck S."/>
            <person name="Brettin T."/>
            <person name="Bruce D."/>
            <person name="Han C."/>
            <person name="Tapia R."/>
            <person name="Gilna P."/>
            <person name="Kiss H."/>
            <person name="Schmutz J."/>
            <person name="Larimer F."/>
            <person name="Land M."/>
            <person name="Hauser L."/>
            <person name="Kyrpides N."/>
            <person name="Lykidis A."/>
            <person name="Richardson P."/>
        </authorList>
    </citation>
    <scope>NUCLEOTIDE SEQUENCE [LARGE SCALE GENOMIC DNA]</scope>
    <source>
        <strain>OS217 / ATCC BAA-1090 / DSM 15013</strain>
    </source>
</reference>
<sequence length="230" mass="24183">MKIGIIGAMEPEVAHLIQSLTSAEHSLIAGIEFISGQIAGKDVVITRSGIGKVAASIATTLLIEKFAVTQVVNTGSAGGFVDSLKIGDIVISSEVRHHDVDVTAFGYEIGQMAQQPAAFIPDAALVEAAKKAVSALGEVKAIEGLICTGDSFICDPERTKVMRANFPTMAACEMEGAAIAQVCHQFKVPFVVIRSLSDNANNDSPVDFDSYIIKAGHHSAMMVVALLTEL</sequence>
<keyword id="KW-0028">Amino-acid biosynthesis</keyword>
<keyword id="KW-0378">Hydrolase</keyword>
<keyword id="KW-0486">Methionine biosynthesis</keyword>
<keyword id="KW-1185">Reference proteome</keyword>
<organism>
    <name type="scientific">Shewanella denitrificans (strain OS217 / ATCC BAA-1090 / DSM 15013)</name>
    <dbReference type="NCBI Taxonomy" id="318161"/>
    <lineage>
        <taxon>Bacteria</taxon>
        <taxon>Pseudomonadati</taxon>
        <taxon>Pseudomonadota</taxon>
        <taxon>Gammaproteobacteria</taxon>
        <taxon>Alteromonadales</taxon>
        <taxon>Shewanellaceae</taxon>
        <taxon>Shewanella</taxon>
    </lineage>
</organism>
<name>MTNN_SHEDO</name>
<dbReference type="EC" id="3.2.2.9" evidence="1"/>
<dbReference type="EMBL" id="CP000302">
    <property type="protein sequence ID" value="ABE56080.1"/>
    <property type="molecule type" value="Genomic_DNA"/>
</dbReference>
<dbReference type="RefSeq" id="WP_011497230.1">
    <property type="nucleotide sequence ID" value="NC_007954.1"/>
</dbReference>
<dbReference type="SMR" id="Q12KE6"/>
<dbReference type="STRING" id="318161.Sden_2801"/>
<dbReference type="KEGG" id="sdn:Sden_2801"/>
<dbReference type="eggNOG" id="COG0775">
    <property type="taxonomic scope" value="Bacteria"/>
</dbReference>
<dbReference type="HOGENOM" id="CLU_031248_2_2_6"/>
<dbReference type="OrthoDB" id="9792278at2"/>
<dbReference type="UniPathway" id="UPA00904">
    <property type="reaction ID" value="UER00871"/>
</dbReference>
<dbReference type="Proteomes" id="UP000001982">
    <property type="component" value="Chromosome"/>
</dbReference>
<dbReference type="GO" id="GO:0005829">
    <property type="term" value="C:cytosol"/>
    <property type="evidence" value="ECO:0007669"/>
    <property type="project" value="TreeGrafter"/>
</dbReference>
<dbReference type="GO" id="GO:0008782">
    <property type="term" value="F:adenosylhomocysteine nucleosidase activity"/>
    <property type="evidence" value="ECO:0007669"/>
    <property type="project" value="UniProtKB-UniRule"/>
</dbReference>
<dbReference type="GO" id="GO:0008930">
    <property type="term" value="F:methylthioadenosine nucleosidase activity"/>
    <property type="evidence" value="ECO:0007669"/>
    <property type="project" value="UniProtKB-UniRule"/>
</dbReference>
<dbReference type="GO" id="GO:0019509">
    <property type="term" value="P:L-methionine salvage from methylthioadenosine"/>
    <property type="evidence" value="ECO:0007669"/>
    <property type="project" value="UniProtKB-UniRule"/>
</dbReference>
<dbReference type="GO" id="GO:0019284">
    <property type="term" value="P:L-methionine salvage from S-adenosylmethionine"/>
    <property type="evidence" value="ECO:0007669"/>
    <property type="project" value="TreeGrafter"/>
</dbReference>
<dbReference type="GO" id="GO:0009164">
    <property type="term" value="P:nucleoside catabolic process"/>
    <property type="evidence" value="ECO:0007669"/>
    <property type="project" value="InterPro"/>
</dbReference>
<dbReference type="CDD" id="cd09008">
    <property type="entry name" value="MTAN"/>
    <property type="match status" value="1"/>
</dbReference>
<dbReference type="FunFam" id="3.40.50.1580:FF:000001">
    <property type="entry name" value="MTA/SAH nucleosidase family protein"/>
    <property type="match status" value="1"/>
</dbReference>
<dbReference type="Gene3D" id="3.40.50.1580">
    <property type="entry name" value="Nucleoside phosphorylase domain"/>
    <property type="match status" value="1"/>
</dbReference>
<dbReference type="HAMAP" id="MF_01684">
    <property type="entry name" value="Salvage_MtnN"/>
    <property type="match status" value="1"/>
</dbReference>
<dbReference type="InterPro" id="IPR010049">
    <property type="entry name" value="MTA_SAH_Nsdase"/>
</dbReference>
<dbReference type="InterPro" id="IPR000845">
    <property type="entry name" value="Nucleoside_phosphorylase_d"/>
</dbReference>
<dbReference type="InterPro" id="IPR035994">
    <property type="entry name" value="Nucleoside_phosphorylase_sf"/>
</dbReference>
<dbReference type="NCBIfam" id="TIGR01704">
    <property type="entry name" value="MTA_SAH-Nsdase"/>
    <property type="match status" value="1"/>
</dbReference>
<dbReference type="NCBIfam" id="NF004079">
    <property type="entry name" value="PRK05584.1"/>
    <property type="match status" value="1"/>
</dbReference>
<dbReference type="PANTHER" id="PTHR46832">
    <property type="entry name" value="5'-METHYLTHIOADENOSINE/S-ADENOSYLHOMOCYSTEINE NUCLEOSIDASE"/>
    <property type="match status" value="1"/>
</dbReference>
<dbReference type="PANTHER" id="PTHR46832:SF1">
    <property type="entry name" value="5'-METHYLTHIOADENOSINE_S-ADENOSYLHOMOCYSTEINE NUCLEOSIDASE"/>
    <property type="match status" value="1"/>
</dbReference>
<dbReference type="Pfam" id="PF01048">
    <property type="entry name" value="PNP_UDP_1"/>
    <property type="match status" value="1"/>
</dbReference>
<dbReference type="SUPFAM" id="SSF53167">
    <property type="entry name" value="Purine and uridine phosphorylases"/>
    <property type="match status" value="1"/>
</dbReference>
<protein>
    <recommendedName>
        <fullName evidence="1">5'-methylthioadenosine/S-adenosylhomocysteine nucleosidase</fullName>
        <shortName evidence="1">MTA/SAH nucleosidase</shortName>
        <shortName evidence="1">MTAN</shortName>
        <ecNumber evidence="1">3.2.2.9</ecNumber>
    </recommendedName>
    <alternativeName>
        <fullName evidence="1">5'-deoxyadenosine nucleosidase</fullName>
        <shortName evidence="1">DOA nucleosidase</shortName>
        <shortName evidence="1">dAdo nucleosidase</shortName>
    </alternativeName>
    <alternativeName>
        <fullName evidence="1">5'-methylthioadenosine nucleosidase</fullName>
        <shortName evidence="1">MTA nucleosidase</shortName>
    </alternativeName>
    <alternativeName>
        <fullName evidence="1">S-adenosylhomocysteine nucleosidase</fullName>
        <shortName evidence="1">AdoHcy nucleosidase</shortName>
        <shortName evidence="1">SAH nucleosidase</shortName>
        <shortName evidence="1">SRH nucleosidase</shortName>
    </alternativeName>
</protein>
<comment type="function">
    <text evidence="1">Catalyzes the irreversible cleavage of the glycosidic bond in both 5'-methylthioadenosine (MTA) and S-adenosylhomocysteine (SAH/AdoHcy) to adenine and the corresponding thioribose, 5'-methylthioribose and S-ribosylhomocysteine, respectively. Also cleaves 5'-deoxyadenosine, a toxic by-product of radical S-adenosylmethionine (SAM) enzymes, into 5-deoxyribose and adenine.</text>
</comment>
<comment type="catalytic activity">
    <reaction evidence="1">
        <text>S-adenosyl-L-homocysteine + H2O = S-(5-deoxy-D-ribos-5-yl)-L-homocysteine + adenine</text>
        <dbReference type="Rhea" id="RHEA:17805"/>
        <dbReference type="ChEBI" id="CHEBI:15377"/>
        <dbReference type="ChEBI" id="CHEBI:16708"/>
        <dbReference type="ChEBI" id="CHEBI:57856"/>
        <dbReference type="ChEBI" id="CHEBI:58195"/>
        <dbReference type="EC" id="3.2.2.9"/>
    </reaction>
</comment>
<comment type="catalytic activity">
    <reaction evidence="1">
        <text>S-methyl-5'-thioadenosine + H2O = 5-(methylsulfanyl)-D-ribose + adenine</text>
        <dbReference type="Rhea" id="RHEA:13617"/>
        <dbReference type="ChEBI" id="CHEBI:15377"/>
        <dbReference type="ChEBI" id="CHEBI:16708"/>
        <dbReference type="ChEBI" id="CHEBI:17509"/>
        <dbReference type="ChEBI" id="CHEBI:78440"/>
        <dbReference type="EC" id="3.2.2.9"/>
    </reaction>
</comment>
<comment type="catalytic activity">
    <reaction evidence="1">
        <text>5'-deoxyadenosine + H2O = 5-deoxy-D-ribose + adenine</text>
        <dbReference type="Rhea" id="RHEA:29859"/>
        <dbReference type="ChEBI" id="CHEBI:15377"/>
        <dbReference type="ChEBI" id="CHEBI:16708"/>
        <dbReference type="ChEBI" id="CHEBI:17319"/>
        <dbReference type="ChEBI" id="CHEBI:149540"/>
        <dbReference type="EC" id="3.2.2.9"/>
    </reaction>
    <physiologicalReaction direction="left-to-right" evidence="1">
        <dbReference type="Rhea" id="RHEA:29860"/>
    </physiologicalReaction>
</comment>
<comment type="pathway">
    <text evidence="1">Amino-acid biosynthesis; L-methionine biosynthesis via salvage pathway; S-methyl-5-thio-alpha-D-ribose 1-phosphate from S-methyl-5'-thioadenosine (hydrolase route): step 1/2.</text>
</comment>
<comment type="similarity">
    <text evidence="1">Belongs to the PNP/UDP phosphorylase family. MtnN subfamily.</text>
</comment>
<feature type="chain" id="PRO_0000359343" description="5'-methylthioadenosine/S-adenosylhomocysteine nucleosidase">
    <location>
        <begin position="1"/>
        <end position="230"/>
    </location>
</feature>
<feature type="active site" description="Proton acceptor" evidence="1">
    <location>
        <position position="12"/>
    </location>
</feature>
<feature type="active site" description="Proton donor" evidence="1">
    <location>
        <position position="198"/>
    </location>
</feature>
<feature type="binding site" evidence="1">
    <location>
        <position position="78"/>
    </location>
    <ligand>
        <name>substrate</name>
    </ligand>
</feature>
<feature type="binding site" evidence="1">
    <location>
        <position position="153"/>
    </location>
    <ligand>
        <name>substrate</name>
    </ligand>
</feature>
<feature type="binding site" evidence="1">
    <location>
        <begin position="174"/>
        <end position="175"/>
    </location>
    <ligand>
        <name>substrate</name>
    </ligand>
</feature>
<evidence type="ECO:0000255" key="1">
    <source>
        <dbReference type="HAMAP-Rule" id="MF_01684"/>
    </source>
</evidence>